<gene>
    <name evidence="2" type="primary">rpsO</name>
    <name type="synonym">rprA</name>
</gene>
<name>RS15_PHOLU</name>
<proteinExistence type="inferred from homology"/>
<evidence type="ECO:0000250" key="1"/>
<evidence type="ECO:0000255" key="2">
    <source>
        <dbReference type="HAMAP-Rule" id="MF_01343"/>
    </source>
</evidence>
<evidence type="ECO:0000305" key="3"/>
<dbReference type="EMBL" id="X76069">
    <property type="protein sequence ID" value="CAA53670.1"/>
    <property type="molecule type" value="Genomic_DNA"/>
</dbReference>
<dbReference type="PIR" id="S38882">
    <property type="entry name" value="S38882"/>
</dbReference>
<dbReference type="SMR" id="P41120"/>
<dbReference type="STRING" id="29488.KS18_11525"/>
<dbReference type="GO" id="GO:0022627">
    <property type="term" value="C:cytosolic small ribosomal subunit"/>
    <property type="evidence" value="ECO:0007669"/>
    <property type="project" value="TreeGrafter"/>
</dbReference>
<dbReference type="GO" id="GO:0019843">
    <property type="term" value="F:rRNA binding"/>
    <property type="evidence" value="ECO:0007669"/>
    <property type="project" value="UniProtKB-UniRule"/>
</dbReference>
<dbReference type="GO" id="GO:0003735">
    <property type="term" value="F:structural constituent of ribosome"/>
    <property type="evidence" value="ECO:0007669"/>
    <property type="project" value="InterPro"/>
</dbReference>
<dbReference type="GO" id="GO:0006412">
    <property type="term" value="P:translation"/>
    <property type="evidence" value="ECO:0007669"/>
    <property type="project" value="UniProtKB-UniRule"/>
</dbReference>
<dbReference type="CDD" id="cd00353">
    <property type="entry name" value="Ribosomal_S15p_S13e"/>
    <property type="match status" value="1"/>
</dbReference>
<dbReference type="FunFam" id="1.10.287.10:FF:000002">
    <property type="entry name" value="30S ribosomal protein S15"/>
    <property type="match status" value="1"/>
</dbReference>
<dbReference type="Gene3D" id="6.10.250.3130">
    <property type="match status" value="1"/>
</dbReference>
<dbReference type="Gene3D" id="1.10.287.10">
    <property type="entry name" value="S15/NS1, RNA-binding"/>
    <property type="match status" value="1"/>
</dbReference>
<dbReference type="HAMAP" id="MF_01343_B">
    <property type="entry name" value="Ribosomal_uS15_B"/>
    <property type="match status" value="1"/>
</dbReference>
<dbReference type="InterPro" id="IPR000589">
    <property type="entry name" value="Ribosomal_uS15"/>
</dbReference>
<dbReference type="InterPro" id="IPR005290">
    <property type="entry name" value="Ribosomal_uS15_bac-type"/>
</dbReference>
<dbReference type="InterPro" id="IPR009068">
    <property type="entry name" value="uS15_NS1_RNA-bd_sf"/>
</dbReference>
<dbReference type="NCBIfam" id="TIGR00952">
    <property type="entry name" value="S15_bact"/>
    <property type="match status" value="1"/>
</dbReference>
<dbReference type="PANTHER" id="PTHR23321">
    <property type="entry name" value="RIBOSOMAL PROTEIN S15, BACTERIAL AND ORGANELLAR"/>
    <property type="match status" value="1"/>
</dbReference>
<dbReference type="PANTHER" id="PTHR23321:SF26">
    <property type="entry name" value="SMALL RIBOSOMAL SUBUNIT PROTEIN US15M"/>
    <property type="match status" value="1"/>
</dbReference>
<dbReference type="Pfam" id="PF00312">
    <property type="entry name" value="Ribosomal_S15"/>
    <property type="match status" value="1"/>
</dbReference>
<dbReference type="SMART" id="SM01387">
    <property type="entry name" value="Ribosomal_S15"/>
    <property type="match status" value="1"/>
</dbReference>
<dbReference type="SUPFAM" id="SSF47060">
    <property type="entry name" value="S15/NS1 RNA-binding domain"/>
    <property type="match status" value="1"/>
</dbReference>
<dbReference type="PROSITE" id="PS00362">
    <property type="entry name" value="RIBOSOMAL_S15"/>
    <property type="match status" value="1"/>
</dbReference>
<sequence length="89" mass="10113">MSLSTEAKAQIIAEFGRDANDSGSSEVQVALLTAQINHLQGHFSEHKKDHHSRRGLLRMVSQRRKLLDYLKRKNVTSYTALIGRLGLRR</sequence>
<comment type="function">
    <text evidence="2">One of the primary rRNA binding proteins, it binds directly to 16S rRNA where it helps nucleate assembly of the platform of the 30S subunit by binding and bridging several RNA helices of the 16S rRNA.</text>
</comment>
<comment type="function">
    <text evidence="2">Forms an intersubunit bridge (bridge B4) with the 23S rRNA of the 50S subunit in the ribosome.</text>
</comment>
<comment type="subunit">
    <text evidence="2">Part of the 30S ribosomal subunit. Forms a bridge to the 50S subunit in the 70S ribosome, contacting the 23S rRNA.</text>
</comment>
<comment type="similarity">
    <text evidence="2">Belongs to the universal ribosomal protein uS15 family.</text>
</comment>
<organism>
    <name type="scientific">Photorhabdus luminescens</name>
    <name type="common">Xenorhabdus luminescens</name>
    <dbReference type="NCBI Taxonomy" id="29488"/>
    <lineage>
        <taxon>Bacteria</taxon>
        <taxon>Pseudomonadati</taxon>
        <taxon>Pseudomonadota</taxon>
        <taxon>Gammaproteobacteria</taxon>
        <taxon>Enterobacterales</taxon>
        <taxon>Morganellaceae</taxon>
        <taxon>Photorhabdus</taxon>
    </lineage>
</organism>
<accession>P41120</accession>
<feature type="initiator methionine" description="Removed" evidence="1">
    <location>
        <position position="1"/>
    </location>
</feature>
<feature type="chain" id="PRO_0000115501" description="Small ribosomal subunit protein uS15">
    <location>
        <begin position="2"/>
        <end position="89"/>
    </location>
</feature>
<reference key="1">
    <citation type="journal article" date="1994" name="J. Bacteriol.">
        <title>The gene coding for polynucleotide phosphorylase in Photorhabdus sp. strain K122 is induced at low temperatures.</title>
        <authorList>
            <person name="Clarke D.J."/>
            <person name="Dowds B.C.A."/>
        </authorList>
    </citation>
    <scope>NUCLEOTIDE SEQUENCE [GENOMIC DNA]</scope>
    <source>
        <strain>K122</strain>
    </source>
</reference>
<keyword id="KW-0687">Ribonucleoprotein</keyword>
<keyword id="KW-0689">Ribosomal protein</keyword>
<keyword id="KW-0694">RNA-binding</keyword>
<keyword id="KW-0699">rRNA-binding</keyword>
<protein>
    <recommendedName>
        <fullName evidence="2">Small ribosomal subunit protein uS15</fullName>
    </recommendedName>
    <alternativeName>
        <fullName evidence="3">30S ribosomal protein S15</fullName>
    </alternativeName>
</protein>